<gene>
    <name type="primary">TOMM5</name>
    <name type="synonym">TOM5</name>
</gene>
<sequence>MFRIEGLAPKLDPEEMKRKMREDVISSIRNFLIYVALLRVTPFILKKLDSI</sequence>
<proteinExistence type="inferred from homology"/>
<accession>Q5R676</accession>
<feature type="chain" id="PRO_0000230672" description="Mitochondrial import receptor subunit TOM5 homolog">
    <location>
        <begin position="1"/>
        <end position="51"/>
    </location>
</feature>
<feature type="transmembrane region" description="Helical" evidence="3">
    <location>
        <begin position="27"/>
        <end position="45"/>
    </location>
</feature>
<feature type="modified residue" description="N-acetylmethionine" evidence="2">
    <location>
        <position position="1"/>
    </location>
</feature>
<feature type="cross-link" description="Glycyl lysine isopeptide (Lys-Gly) (interchain with G-Cter in SUMO2)" evidence="2">
    <location>
        <position position="10"/>
    </location>
</feature>
<organism>
    <name type="scientific">Pongo abelii</name>
    <name type="common">Sumatran orangutan</name>
    <name type="synonym">Pongo pygmaeus abelii</name>
    <dbReference type="NCBI Taxonomy" id="9601"/>
    <lineage>
        <taxon>Eukaryota</taxon>
        <taxon>Metazoa</taxon>
        <taxon>Chordata</taxon>
        <taxon>Craniata</taxon>
        <taxon>Vertebrata</taxon>
        <taxon>Euteleostomi</taxon>
        <taxon>Mammalia</taxon>
        <taxon>Eutheria</taxon>
        <taxon>Euarchontoglires</taxon>
        <taxon>Primates</taxon>
        <taxon>Haplorrhini</taxon>
        <taxon>Catarrhini</taxon>
        <taxon>Hominidae</taxon>
        <taxon>Pongo</taxon>
    </lineage>
</organism>
<evidence type="ECO:0000250" key="1"/>
<evidence type="ECO:0000250" key="2">
    <source>
        <dbReference type="UniProtKB" id="Q8N4H5"/>
    </source>
</evidence>
<evidence type="ECO:0000255" key="3"/>
<evidence type="ECO:0000305" key="4"/>
<name>TOM5_PONAB</name>
<dbReference type="EMBL" id="CR860619">
    <property type="protein sequence ID" value="CAH92740.1"/>
    <property type="molecule type" value="mRNA"/>
</dbReference>
<dbReference type="RefSeq" id="NP_001128297.1">
    <property type="nucleotide sequence ID" value="NM_001134825.1"/>
</dbReference>
<dbReference type="SMR" id="Q5R676"/>
<dbReference type="FunCoup" id="Q5R676">
    <property type="interactions" value="823"/>
</dbReference>
<dbReference type="STRING" id="9601.ENSPPYP00000021359"/>
<dbReference type="Ensembl" id="ENSPPYT00000022221.3">
    <property type="protein sequence ID" value="ENSPPYP00000021359.2"/>
    <property type="gene ID" value="ENSPPYG00000019059.3"/>
</dbReference>
<dbReference type="GeneID" id="100173595"/>
<dbReference type="KEGG" id="pon:100173595"/>
<dbReference type="CTD" id="401505"/>
<dbReference type="eggNOG" id="ENOG502S99E">
    <property type="taxonomic scope" value="Eukaryota"/>
</dbReference>
<dbReference type="GeneTree" id="ENSGT00940000163364"/>
<dbReference type="HOGENOM" id="CLU_182400_2_0_1"/>
<dbReference type="InParanoid" id="Q5R676"/>
<dbReference type="OMA" id="QIYCSSE"/>
<dbReference type="OrthoDB" id="8893106at2759"/>
<dbReference type="Proteomes" id="UP000001595">
    <property type="component" value="Chromosome 9"/>
</dbReference>
<dbReference type="GO" id="GO:0005742">
    <property type="term" value="C:mitochondrial outer membrane translocase complex"/>
    <property type="evidence" value="ECO:0000250"/>
    <property type="project" value="UniProtKB"/>
</dbReference>
<dbReference type="GO" id="GO:0006626">
    <property type="term" value="P:protein targeting to mitochondrion"/>
    <property type="evidence" value="ECO:0000305"/>
    <property type="project" value="UniProtKB"/>
</dbReference>
<dbReference type="GO" id="GO:0015031">
    <property type="term" value="P:protein transport"/>
    <property type="evidence" value="ECO:0007669"/>
    <property type="project" value="UniProtKB-KW"/>
</dbReference>
<dbReference type="InterPro" id="IPR019603">
    <property type="entry name" value="Tom5"/>
</dbReference>
<dbReference type="InterPro" id="IPR029179">
    <property type="entry name" value="TOMM5_metazoa"/>
</dbReference>
<dbReference type="PANTHER" id="PTHR28436">
    <property type="entry name" value="MITOCHONDRIAL IMPORT RECEPTOR SUBUNIT TOM5 HOMOLOG"/>
    <property type="match status" value="1"/>
</dbReference>
<dbReference type="PANTHER" id="PTHR28436:SF1">
    <property type="entry name" value="MITOCHONDRIAL IMPORT RECEPTOR SUBUNIT TOM5 HOMOLOG"/>
    <property type="match status" value="1"/>
</dbReference>
<dbReference type="Pfam" id="PF10642">
    <property type="entry name" value="Tom5"/>
    <property type="match status" value="1"/>
</dbReference>
<keyword id="KW-0007">Acetylation</keyword>
<keyword id="KW-1017">Isopeptide bond</keyword>
<keyword id="KW-0472">Membrane</keyword>
<keyword id="KW-0496">Mitochondrion</keyword>
<keyword id="KW-1000">Mitochondrion outer membrane</keyword>
<keyword id="KW-0653">Protein transport</keyword>
<keyword id="KW-1185">Reference proteome</keyword>
<keyword id="KW-0812">Transmembrane</keyword>
<keyword id="KW-1133">Transmembrane helix</keyword>
<keyword id="KW-0813">Transport</keyword>
<keyword id="KW-0832">Ubl conjugation</keyword>
<comment type="subunit">
    <text evidence="1">Forms part of the preprotein translocase complex of the outer mitochondrial membrane (TOM complex) which consists of at least 7 different proteins (TOMM5, TOMM6, TOMM7, TOMM20, TOMM22, TOMM40 and TOMM70).</text>
</comment>
<comment type="subcellular location">
    <subcellularLocation>
        <location evidence="1">Mitochondrion outer membrane</location>
        <topology evidence="1">Single-pass membrane protein</topology>
    </subcellularLocation>
</comment>
<comment type="similarity">
    <text evidence="4">Belongs to the Tom5 family.</text>
</comment>
<protein>
    <recommendedName>
        <fullName>Mitochondrial import receptor subunit TOM5 homolog</fullName>
    </recommendedName>
</protein>
<reference key="1">
    <citation type="submission" date="2004-11" db="EMBL/GenBank/DDBJ databases">
        <authorList>
            <consortium name="The German cDNA consortium"/>
        </authorList>
    </citation>
    <scope>NUCLEOTIDE SEQUENCE [LARGE SCALE MRNA]</scope>
    <source>
        <tissue>Brain cortex</tissue>
    </source>
</reference>